<name>T184C_CHICK</name>
<gene>
    <name type="primary">TMEM184C</name>
    <name type="synonym">TMEM34</name>
    <name type="ORF">RCJMB04_1i7</name>
</gene>
<keyword id="KW-0472">Membrane</keyword>
<keyword id="KW-1185">Reference proteome</keyword>
<keyword id="KW-0812">Transmembrane</keyword>
<keyword id="KW-1133">Transmembrane helix</keyword>
<evidence type="ECO:0000250" key="1"/>
<evidence type="ECO:0000255" key="2"/>
<evidence type="ECO:0000256" key="3">
    <source>
        <dbReference type="SAM" id="MobiDB-lite"/>
    </source>
</evidence>
<evidence type="ECO:0000305" key="4"/>
<sequence>MPCTCGNWRRWIRPLVVLLYIVGLLVVVPLCVWELQKLEVGIHTKAWFIAGIFLLMTIPISLWGILQHLVHYTQPELQKPIIRILWMVPIYSLDSWIALKYPNIAIYVDTCRECYEAYVIYNFMVFLSNYLTNRYPNLVLIIEAKDQQRHLPPLCCCPSWAMGEVLLFRCKLGVLQYTVVRPFTTIIALICELVGVYDEGNFSFDNAWTYLVILNNMSQLFAMYCLVLFYKVLREELNPIQPVGKFLCVKMVVFVSFWQAVLIALLVKVGVISEKHTWEWQSVEAVATGLQDFIICVEMFLAAIAHHYSFSYKPYVQEAEEGSCFDSFLAMWDISDIRADISEQVRNVGRTVLGQPRKMFFAEDHEQNEHTSLLSSSTQDPISDASSMPSSPMGHYQGFGHTVTPLTTPTTVPVVDGIYNTSATRDTEESPELMHNSSEKALDRS</sequence>
<protein>
    <recommendedName>
        <fullName>Transmembrane protein 184C</fullName>
    </recommendedName>
    <alternativeName>
        <fullName>Transmembrane protein 34</fullName>
    </alternativeName>
</protein>
<reference key="1">
    <citation type="journal article" date="2005" name="Genome Biol.">
        <title>Full-length cDNAs from chicken bursal lymphocytes to facilitate gene function analysis.</title>
        <authorList>
            <person name="Caldwell R.B."/>
            <person name="Kierzek A.M."/>
            <person name="Arakawa H."/>
            <person name="Bezzubov Y."/>
            <person name="Zaim J."/>
            <person name="Fiedler P."/>
            <person name="Kutter S."/>
            <person name="Blagodatski A."/>
            <person name="Kostovska D."/>
            <person name="Koter M."/>
            <person name="Plachy J."/>
            <person name="Carninci P."/>
            <person name="Hayashizaki Y."/>
            <person name="Buerstedde J.-M."/>
        </authorList>
    </citation>
    <scope>NUCLEOTIDE SEQUENCE [LARGE SCALE MRNA]</scope>
    <source>
        <strain>CB</strain>
        <tissue>Bursa of Fabricius</tissue>
    </source>
</reference>
<proteinExistence type="evidence at transcript level"/>
<dbReference type="EMBL" id="AJ719341">
    <property type="protein sequence ID" value="CAG31000.1"/>
    <property type="molecule type" value="mRNA"/>
</dbReference>
<dbReference type="RefSeq" id="NP_001008468.1">
    <property type="nucleotide sequence ID" value="NM_001008468.2"/>
</dbReference>
<dbReference type="FunCoup" id="Q5ZMP3">
    <property type="interactions" value="1180"/>
</dbReference>
<dbReference type="STRING" id="9031.ENSGALP00000016253"/>
<dbReference type="PaxDb" id="9031-ENSGALP00000016253"/>
<dbReference type="Ensembl" id="ENSGALT00010015810.1">
    <property type="protein sequence ID" value="ENSGALP00010009150.1"/>
    <property type="gene ID" value="ENSGALG00010006614.1"/>
</dbReference>
<dbReference type="GeneID" id="422469"/>
<dbReference type="KEGG" id="gga:422469"/>
<dbReference type="CTD" id="55751"/>
<dbReference type="VEuPathDB" id="HostDB:geneid_422469"/>
<dbReference type="eggNOG" id="KOG2641">
    <property type="taxonomic scope" value="Eukaryota"/>
</dbReference>
<dbReference type="GeneTree" id="ENSGT00940000155201"/>
<dbReference type="HOGENOM" id="CLU_012923_1_1_1"/>
<dbReference type="InParanoid" id="Q5ZMP3"/>
<dbReference type="OMA" id="AHAFVFN"/>
<dbReference type="OrthoDB" id="5348404at2759"/>
<dbReference type="PhylomeDB" id="Q5ZMP3"/>
<dbReference type="TreeFam" id="TF324245"/>
<dbReference type="PRO" id="PR:Q5ZMP3"/>
<dbReference type="Proteomes" id="UP000000539">
    <property type="component" value="Chromosome 4"/>
</dbReference>
<dbReference type="Bgee" id="ENSGALG00000010019">
    <property type="expression patterns" value="Expressed in ovary and 14 other cell types or tissues"/>
</dbReference>
<dbReference type="GO" id="GO:0016020">
    <property type="term" value="C:membrane"/>
    <property type="evidence" value="ECO:0000318"/>
    <property type="project" value="GO_Central"/>
</dbReference>
<dbReference type="GO" id="GO:0022857">
    <property type="term" value="F:transmembrane transporter activity"/>
    <property type="evidence" value="ECO:0000318"/>
    <property type="project" value="GO_Central"/>
</dbReference>
<dbReference type="InterPro" id="IPR005178">
    <property type="entry name" value="Ostalpha/TMEM184C"/>
</dbReference>
<dbReference type="PANTHER" id="PTHR23423">
    <property type="entry name" value="ORGANIC SOLUTE TRANSPORTER-RELATED"/>
    <property type="match status" value="1"/>
</dbReference>
<dbReference type="Pfam" id="PF03619">
    <property type="entry name" value="Solute_trans_a"/>
    <property type="match status" value="1"/>
</dbReference>
<dbReference type="SMART" id="SM01417">
    <property type="entry name" value="Solute_trans_a"/>
    <property type="match status" value="1"/>
</dbReference>
<accession>Q5ZMP3</accession>
<feature type="chain" id="PRO_0000287571" description="Transmembrane protein 184C">
    <location>
        <begin position="1"/>
        <end position="445"/>
    </location>
</feature>
<feature type="transmembrane region" description="Helical" evidence="2">
    <location>
        <begin position="15"/>
        <end position="35"/>
    </location>
</feature>
<feature type="transmembrane region" description="Helical" evidence="2">
    <location>
        <begin position="46"/>
        <end position="66"/>
    </location>
</feature>
<feature type="transmembrane region" description="Helical" evidence="2">
    <location>
        <begin position="84"/>
        <end position="104"/>
    </location>
</feature>
<feature type="transmembrane region" description="Helical" evidence="2">
    <location>
        <begin position="177"/>
        <end position="197"/>
    </location>
</feature>
<feature type="transmembrane region" description="Helical" evidence="2">
    <location>
        <begin position="210"/>
        <end position="230"/>
    </location>
</feature>
<feature type="transmembrane region" description="Helical" evidence="2">
    <location>
        <begin position="252"/>
        <end position="272"/>
    </location>
</feature>
<feature type="transmembrane region" description="Helical" evidence="2">
    <location>
        <begin position="285"/>
        <end position="305"/>
    </location>
</feature>
<feature type="region of interest" description="Disordered" evidence="3">
    <location>
        <begin position="369"/>
        <end position="393"/>
    </location>
</feature>
<feature type="region of interest" description="Disordered" evidence="3">
    <location>
        <begin position="421"/>
        <end position="445"/>
    </location>
</feature>
<feature type="compositionally biased region" description="Polar residues" evidence="3">
    <location>
        <begin position="370"/>
        <end position="390"/>
    </location>
</feature>
<organism>
    <name type="scientific">Gallus gallus</name>
    <name type="common">Chicken</name>
    <dbReference type="NCBI Taxonomy" id="9031"/>
    <lineage>
        <taxon>Eukaryota</taxon>
        <taxon>Metazoa</taxon>
        <taxon>Chordata</taxon>
        <taxon>Craniata</taxon>
        <taxon>Vertebrata</taxon>
        <taxon>Euteleostomi</taxon>
        <taxon>Archelosauria</taxon>
        <taxon>Archosauria</taxon>
        <taxon>Dinosauria</taxon>
        <taxon>Saurischia</taxon>
        <taxon>Theropoda</taxon>
        <taxon>Coelurosauria</taxon>
        <taxon>Aves</taxon>
        <taxon>Neognathae</taxon>
        <taxon>Galloanserae</taxon>
        <taxon>Galliformes</taxon>
        <taxon>Phasianidae</taxon>
        <taxon>Phasianinae</taxon>
        <taxon>Gallus</taxon>
    </lineage>
</organism>
<comment type="function">
    <text evidence="1">May play a role in cell growth.</text>
</comment>
<comment type="subcellular location">
    <subcellularLocation>
        <location evidence="4">Membrane</location>
        <topology evidence="4">Multi-pass membrane protein</topology>
    </subcellularLocation>
</comment>
<comment type="similarity">
    <text evidence="4">Belongs to the TMEM184 family.</text>
</comment>